<feature type="chain" id="PRO_1000206062" description="Na(+)-translocating NADH-quinone reductase subunit A">
    <location>
        <begin position="1"/>
        <end position="447"/>
    </location>
</feature>
<reference key="1">
    <citation type="submission" date="2009-05" db="EMBL/GenBank/DDBJ databases">
        <title>Complete sequence of Tolumonas auensis DSM 9187.</title>
        <authorList>
            <consortium name="US DOE Joint Genome Institute"/>
            <person name="Lucas S."/>
            <person name="Copeland A."/>
            <person name="Lapidus A."/>
            <person name="Glavina del Rio T."/>
            <person name="Tice H."/>
            <person name="Bruce D."/>
            <person name="Goodwin L."/>
            <person name="Pitluck S."/>
            <person name="Chertkov O."/>
            <person name="Brettin T."/>
            <person name="Detter J.C."/>
            <person name="Han C."/>
            <person name="Larimer F."/>
            <person name="Land M."/>
            <person name="Hauser L."/>
            <person name="Kyrpides N."/>
            <person name="Mikhailova N."/>
            <person name="Spring S."/>
            <person name="Beller H."/>
        </authorList>
    </citation>
    <scope>NUCLEOTIDE SEQUENCE [LARGE SCALE GENOMIC DNA]</scope>
    <source>
        <strain>DSM 9187 / NBRC 110442 / TA 4</strain>
    </source>
</reference>
<sequence length="447" mass="48759">MITIKKGLDIPISGAPEQVIYEAPAVHHVALLGEEFPGLKPTMLVKVGDHVKKGQPLFENKKNPGVIFTAPASGLVTEIHRGHQRVFQALVIAQDPTIGAVSFQRYQDEELPQLSREQVQQQLLNSGMWTALRTRPYSKSPVPGSVPKAIFVTAMDTNPLAASAELIIEQQPVAFVNGLTLLSRLTDGKVYVCKGENSLPHSHVANVEERVFTGPHPAGLAGTHIHFTEPASAKKTLWHINYQDVIAIGHLFASGELYNERIVSLAGPGVSAPRLVRTQLGACLSELTRNQLLAGEQRIISGSVLSGNKAAEVHDYLGRFHLQVSVLPEGREKVFLGWIMPGQDKFSVTRSFMGHLSNVKRLVFTTAKNGSERAMVPIGNYEKIMPLDILPTLLLRDLAAGDTDSAQQLGCLELDEEDLALCTFVCPGKTEYGPLLRKCLTKIELEG</sequence>
<keyword id="KW-0406">Ion transport</keyword>
<keyword id="KW-0520">NAD</keyword>
<keyword id="KW-1185">Reference proteome</keyword>
<keyword id="KW-0915">Sodium</keyword>
<keyword id="KW-0739">Sodium transport</keyword>
<keyword id="KW-1278">Translocase</keyword>
<keyword id="KW-0813">Transport</keyword>
<keyword id="KW-0830">Ubiquinone</keyword>
<gene>
    <name evidence="1" type="primary">nqrA</name>
    <name type="ordered locus">Tola_2993</name>
</gene>
<organism>
    <name type="scientific">Tolumonas auensis (strain DSM 9187 / NBRC 110442 / TA 4)</name>
    <dbReference type="NCBI Taxonomy" id="595494"/>
    <lineage>
        <taxon>Bacteria</taxon>
        <taxon>Pseudomonadati</taxon>
        <taxon>Pseudomonadota</taxon>
        <taxon>Gammaproteobacteria</taxon>
        <taxon>Aeromonadales</taxon>
        <taxon>Aeromonadaceae</taxon>
        <taxon>Tolumonas</taxon>
    </lineage>
</organism>
<evidence type="ECO:0000255" key="1">
    <source>
        <dbReference type="HAMAP-Rule" id="MF_00425"/>
    </source>
</evidence>
<proteinExistence type="inferred from homology"/>
<comment type="function">
    <text evidence="1">NQR complex catalyzes the reduction of ubiquinone-1 to ubiquinol by two successive reactions, coupled with the transport of Na(+) ions from the cytoplasm to the periplasm. NqrA to NqrE are probably involved in the second step, the conversion of ubisemiquinone to ubiquinol.</text>
</comment>
<comment type="catalytic activity">
    <reaction evidence="1">
        <text>a ubiquinone + n Na(+)(in) + NADH + H(+) = a ubiquinol + n Na(+)(out) + NAD(+)</text>
        <dbReference type="Rhea" id="RHEA:47748"/>
        <dbReference type="Rhea" id="RHEA-COMP:9565"/>
        <dbReference type="Rhea" id="RHEA-COMP:9566"/>
        <dbReference type="ChEBI" id="CHEBI:15378"/>
        <dbReference type="ChEBI" id="CHEBI:16389"/>
        <dbReference type="ChEBI" id="CHEBI:17976"/>
        <dbReference type="ChEBI" id="CHEBI:29101"/>
        <dbReference type="ChEBI" id="CHEBI:57540"/>
        <dbReference type="ChEBI" id="CHEBI:57945"/>
        <dbReference type="EC" id="7.2.1.1"/>
    </reaction>
</comment>
<comment type="subunit">
    <text evidence="1">Composed of six subunits; NqrA, NqrB, NqrC, NqrD, NqrE and NqrF.</text>
</comment>
<comment type="similarity">
    <text evidence="1">Belongs to the NqrA family.</text>
</comment>
<dbReference type="EC" id="7.2.1.1" evidence="1"/>
<dbReference type="EMBL" id="CP001616">
    <property type="protein sequence ID" value="ACQ94582.1"/>
    <property type="molecule type" value="Genomic_DNA"/>
</dbReference>
<dbReference type="RefSeq" id="WP_015880031.1">
    <property type="nucleotide sequence ID" value="NC_012691.1"/>
</dbReference>
<dbReference type="SMR" id="C4LD51"/>
<dbReference type="STRING" id="595494.Tola_2993"/>
<dbReference type="KEGG" id="tau:Tola_2993"/>
<dbReference type="eggNOG" id="COG1726">
    <property type="taxonomic scope" value="Bacteria"/>
</dbReference>
<dbReference type="HOGENOM" id="CLU_046656_0_0_6"/>
<dbReference type="OrthoDB" id="9774536at2"/>
<dbReference type="Proteomes" id="UP000009073">
    <property type="component" value="Chromosome"/>
</dbReference>
<dbReference type="GO" id="GO:0016655">
    <property type="term" value="F:oxidoreductase activity, acting on NAD(P)H, quinone or similar compound as acceptor"/>
    <property type="evidence" value="ECO:0007669"/>
    <property type="project" value="UniProtKB-UniRule"/>
</dbReference>
<dbReference type="GO" id="GO:0006814">
    <property type="term" value="P:sodium ion transport"/>
    <property type="evidence" value="ECO:0007669"/>
    <property type="project" value="UniProtKB-UniRule"/>
</dbReference>
<dbReference type="Gene3D" id="2.40.50.100">
    <property type="match status" value="1"/>
</dbReference>
<dbReference type="HAMAP" id="MF_00425">
    <property type="entry name" value="NqrA"/>
    <property type="match status" value="1"/>
</dbReference>
<dbReference type="InterPro" id="IPR008703">
    <property type="entry name" value="NqrA"/>
</dbReference>
<dbReference type="InterPro" id="IPR056148">
    <property type="entry name" value="NQRA_2nd"/>
</dbReference>
<dbReference type="InterPro" id="IPR022615">
    <property type="entry name" value="NqrA_C_domain"/>
</dbReference>
<dbReference type="InterPro" id="IPR056147">
    <property type="entry name" value="NQRA_N"/>
</dbReference>
<dbReference type="InterPro" id="IPR011053">
    <property type="entry name" value="Single_hybrid_motif"/>
</dbReference>
<dbReference type="NCBIfam" id="TIGR01936">
    <property type="entry name" value="nqrA"/>
    <property type="match status" value="1"/>
</dbReference>
<dbReference type="NCBIfam" id="NF003759">
    <property type="entry name" value="PRK05352.1-2"/>
    <property type="match status" value="1"/>
</dbReference>
<dbReference type="PANTHER" id="PTHR37839">
    <property type="entry name" value="NA(+)-TRANSLOCATING NADH-QUINONE REDUCTASE SUBUNIT A"/>
    <property type="match status" value="1"/>
</dbReference>
<dbReference type="PANTHER" id="PTHR37839:SF1">
    <property type="entry name" value="NA(+)-TRANSLOCATING NADH-QUINONE REDUCTASE SUBUNIT A"/>
    <property type="match status" value="1"/>
</dbReference>
<dbReference type="Pfam" id="PF24836">
    <property type="entry name" value="NQRA_2nd"/>
    <property type="match status" value="1"/>
</dbReference>
<dbReference type="Pfam" id="PF05896">
    <property type="entry name" value="NQRA_N"/>
    <property type="match status" value="1"/>
</dbReference>
<dbReference type="Pfam" id="PF11973">
    <property type="entry name" value="NQRA_SLBB"/>
    <property type="match status" value="1"/>
</dbReference>
<dbReference type="SUPFAM" id="SSF51230">
    <property type="entry name" value="Single hybrid motif"/>
    <property type="match status" value="1"/>
</dbReference>
<accession>C4LD51</accession>
<protein>
    <recommendedName>
        <fullName evidence="1">Na(+)-translocating NADH-quinone reductase subunit A</fullName>
        <shortName evidence="1">Na(+)-NQR subunit A</shortName>
        <shortName evidence="1">Na(+)-translocating NQR subunit A</shortName>
        <ecNumber evidence="1">7.2.1.1</ecNumber>
    </recommendedName>
    <alternativeName>
        <fullName evidence="1">NQR complex subunit A</fullName>
    </alternativeName>
    <alternativeName>
        <fullName evidence="1">NQR-1 subunit A</fullName>
    </alternativeName>
</protein>
<name>NQRA_TOLAT</name>